<accession>Q9RKF1</accession>
<organism>
    <name type="scientific">Streptomyces coelicolor (strain ATCC BAA-471 / A3(2) / M145)</name>
    <dbReference type="NCBI Taxonomy" id="100226"/>
    <lineage>
        <taxon>Bacteria</taxon>
        <taxon>Bacillati</taxon>
        <taxon>Actinomycetota</taxon>
        <taxon>Actinomycetes</taxon>
        <taxon>Kitasatosporales</taxon>
        <taxon>Streptomycetaceae</taxon>
        <taxon>Streptomyces</taxon>
        <taxon>Streptomyces albidoflavus group</taxon>
    </lineage>
</organism>
<reference key="1">
    <citation type="journal article" date="2002" name="Nature">
        <title>Complete genome sequence of the model actinomycete Streptomyces coelicolor A3(2).</title>
        <authorList>
            <person name="Bentley S.D."/>
            <person name="Chater K.F."/>
            <person name="Cerdeno-Tarraga A.-M."/>
            <person name="Challis G.L."/>
            <person name="Thomson N.R."/>
            <person name="James K.D."/>
            <person name="Harris D.E."/>
            <person name="Quail M.A."/>
            <person name="Kieser H."/>
            <person name="Harper D."/>
            <person name="Bateman A."/>
            <person name="Brown S."/>
            <person name="Chandra G."/>
            <person name="Chen C.W."/>
            <person name="Collins M."/>
            <person name="Cronin A."/>
            <person name="Fraser A."/>
            <person name="Goble A."/>
            <person name="Hidalgo J."/>
            <person name="Hornsby T."/>
            <person name="Howarth S."/>
            <person name="Huang C.-H."/>
            <person name="Kieser T."/>
            <person name="Larke L."/>
            <person name="Murphy L.D."/>
            <person name="Oliver K."/>
            <person name="O'Neil S."/>
            <person name="Rabbinowitsch E."/>
            <person name="Rajandream M.A."/>
            <person name="Rutherford K.M."/>
            <person name="Rutter S."/>
            <person name="Seeger K."/>
            <person name="Saunders D."/>
            <person name="Sharp S."/>
            <person name="Squares R."/>
            <person name="Squares S."/>
            <person name="Taylor K."/>
            <person name="Warren T."/>
            <person name="Wietzorrek A."/>
            <person name="Woodward J.R."/>
            <person name="Barrell B.G."/>
            <person name="Parkhill J."/>
            <person name="Hopwood D.A."/>
        </authorList>
    </citation>
    <scope>NUCLEOTIDE SEQUENCE [LARGE SCALE GENOMIC DNA]</scope>
    <source>
        <strain>ATCC BAA-471 / A3(2) / M145</strain>
    </source>
</reference>
<reference key="2">
    <citation type="journal article" date="2021" name="J. Microbiol. Biotechnol.">
        <title>NADP+-Dependent Dehydrogenase SCO3486 and Cycloisomerase SCO3480: Key Enzymes for 3,6-Anhydro-L-Galactose Catabolism in Streptomyces coelicolor A3(2).</title>
        <authorList>
            <person name="Tsevelkhorloo M."/>
            <person name="Kim S.H."/>
            <person name="Kang D.K."/>
            <person name="Lee C.R."/>
            <person name="Hong S.K."/>
        </authorList>
    </citation>
    <scope>FUNCTION</scope>
    <scope>CATALYTIC ACTIVITY</scope>
    <scope>ACTIVITY REGULATION</scope>
    <scope>BIOPHYSICOCHEMICAL PROPERTIES</scope>
    <scope>BIOTECHNOLOGY</scope>
    <source>
        <strain>ATCC BAA-471 / A3(2) / M145</strain>
    </source>
</reference>
<name>AHGD_STRCO</name>
<dbReference type="EC" id="1.2.1.92" evidence="2"/>
<dbReference type="EMBL" id="AL939116">
    <property type="protein sequence ID" value="CAB61810.1"/>
    <property type="molecule type" value="Genomic_DNA"/>
</dbReference>
<dbReference type="RefSeq" id="NP_627689.1">
    <property type="nucleotide sequence ID" value="NC_003888.3"/>
</dbReference>
<dbReference type="RefSeq" id="WP_011029025.1">
    <property type="nucleotide sequence ID" value="NZ_VNID01000041.1"/>
</dbReference>
<dbReference type="SMR" id="Q9RKF1"/>
<dbReference type="STRING" id="100226.gene:17761108"/>
<dbReference type="PaxDb" id="100226-SCO3486"/>
<dbReference type="KEGG" id="sco:SCO3486"/>
<dbReference type="PATRIC" id="fig|100226.15.peg.3545"/>
<dbReference type="eggNOG" id="COG1012">
    <property type="taxonomic scope" value="Bacteria"/>
</dbReference>
<dbReference type="HOGENOM" id="CLU_005391_5_1_11"/>
<dbReference type="InParanoid" id="Q9RKF1"/>
<dbReference type="OrthoDB" id="6882680at2"/>
<dbReference type="PhylomeDB" id="Q9RKF1"/>
<dbReference type="Proteomes" id="UP000001973">
    <property type="component" value="Chromosome"/>
</dbReference>
<dbReference type="GO" id="GO:0004777">
    <property type="term" value="F:succinate-semialdehyde dehydrogenase (NAD+) activity"/>
    <property type="evidence" value="ECO:0000318"/>
    <property type="project" value="GO_Central"/>
</dbReference>
<dbReference type="GO" id="GO:0009450">
    <property type="term" value="P:gamma-aminobutyric acid catabolic process"/>
    <property type="evidence" value="ECO:0000318"/>
    <property type="project" value="GO_Central"/>
</dbReference>
<dbReference type="FunFam" id="3.40.309.10:FF:000009">
    <property type="entry name" value="Aldehyde dehydrogenase A"/>
    <property type="match status" value="1"/>
</dbReference>
<dbReference type="FunFam" id="3.40.605.10:FF:000007">
    <property type="entry name" value="NAD/NADP-dependent betaine aldehyde dehydrogenase"/>
    <property type="match status" value="1"/>
</dbReference>
<dbReference type="Gene3D" id="3.40.605.10">
    <property type="entry name" value="Aldehyde Dehydrogenase, Chain A, domain 1"/>
    <property type="match status" value="1"/>
</dbReference>
<dbReference type="Gene3D" id="3.40.309.10">
    <property type="entry name" value="Aldehyde Dehydrogenase, Chain A, domain 2"/>
    <property type="match status" value="1"/>
</dbReference>
<dbReference type="InterPro" id="IPR016161">
    <property type="entry name" value="Ald_DH/histidinol_DH"/>
</dbReference>
<dbReference type="InterPro" id="IPR016163">
    <property type="entry name" value="Ald_DH_C"/>
</dbReference>
<dbReference type="InterPro" id="IPR016160">
    <property type="entry name" value="Ald_DH_CS_CYS"/>
</dbReference>
<dbReference type="InterPro" id="IPR029510">
    <property type="entry name" value="Ald_DH_CS_GLU"/>
</dbReference>
<dbReference type="InterPro" id="IPR016162">
    <property type="entry name" value="Ald_DH_N"/>
</dbReference>
<dbReference type="InterPro" id="IPR015590">
    <property type="entry name" value="Aldehyde_DH_dom"/>
</dbReference>
<dbReference type="InterPro" id="IPR050740">
    <property type="entry name" value="Aldehyde_DH_Superfamily"/>
</dbReference>
<dbReference type="PANTHER" id="PTHR43353">
    <property type="entry name" value="SUCCINATE-SEMIALDEHYDE DEHYDROGENASE, MITOCHONDRIAL"/>
    <property type="match status" value="1"/>
</dbReference>
<dbReference type="PANTHER" id="PTHR43353:SF5">
    <property type="entry name" value="SUCCINATE-SEMIALDEHYDE DEHYDROGENASE, MITOCHONDRIAL"/>
    <property type="match status" value="1"/>
</dbReference>
<dbReference type="Pfam" id="PF00171">
    <property type="entry name" value="Aldedh"/>
    <property type="match status" value="1"/>
</dbReference>
<dbReference type="SUPFAM" id="SSF53720">
    <property type="entry name" value="ALDH-like"/>
    <property type="match status" value="1"/>
</dbReference>
<dbReference type="PROSITE" id="PS00070">
    <property type="entry name" value="ALDEHYDE_DEHYDR_CYS"/>
    <property type="match status" value="1"/>
</dbReference>
<dbReference type="PROSITE" id="PS00687">
    <property type="entry name" value="ALDEHYDE_DEHYDR_GLU"/>
    <property type="match status" value="1"/>
</dbReference>
<comment type="function">
    <text evidence="2">Involved in the degradation of 3,6-anhydro-L-galactose, which is the major monomeric sugar of red macroalgae (PubMed:33820885). Catalyzes the oxidation of 3,6-anhydro-L-galactose (AHG) to form 3,6-anhydrogalactonate (AHGA) (PubMed:33820885). Shows broad substrate specificity, with maximum activity toward AHG (PubMed:33820885). The enzyme activities toward D-fructose, D-galactose and D-ribose are between 40% and 50% of the maximum, but those toward L-rhamnose, L-glyceraldehyde, D-glyceraldehyde, L-fucose and D-glucose are much lower (PubMed:33820885).</text>
</comment>
<comment type="catalytic activity">
    <reaction evidence="2">
        <text>3,6-anhydro-alpha-L-galactopyranose + NADP(+) + H2O = 3,6-anhydro-L-galactonate + NADPH + 2 H(+)</text>
        <dbReference type="Rhea" id="RHEA:40803"/>
        <dbReference type="ChEBI" id="CHEBI:15377"/>
        <dbReference type="ChEBI" id="CHEBI:15378"/>
        <dbReference type="ChEBI" id="CHEBI:57783"/>
        <dbReference type="ChEBI" id="CHEBI:58349"/>
        <dbReference type="ChEBI" id="CHEBI:83433"/>
        <dbReference type="ChEBI" id="CHEBI:83435"/>
        <dbReference type="EC" id="1.2.1.92"/>
    </reaction>
    <physiologicalReaction direction="left-to-right" evidence="2">
        <dbReference type="Rhea" id="RHEA:40804"/>
    </physiologicalReaction>
</comment>
<comment type="activity regulation">
    <text evidence="2">Significantly inhibited by EDTA (PubMed:33820885). Activity is enhanced by Fe(2+), but is strongly inhibited by Mn(2+), Cu(2+), Zn(2+), Ni(2+) and Co(2+) (PubMed:33820885).</text>
</comment>
<comment type="biophysicochemical properties">
    <phDependence>
        <text evidence="2">Optimum pH is 6.0.</text>
    </phDependence>
    <temperatureDependence>
        <text evidence="2">Optimum temperature is 50 degrees Celsius (PubMed:33820885). Maintains above 50% of the maximum activity between 40 degrees Celsius and 70 degrees Celsius (PubMed:33820885).</text>
    </temperatureDependence>
</comment>
<comment type="biotechnology">
    <text evidence="5">The AHG metabolic pathway may provide a useful platform for the efficient production of industrial chemicals and biofuels from red macroalgal biomass.</text>
</comment>
<comment type="similarity">
    <text evidence="4">Belongs to the aldehyde dehydrogenase family.</text>
</comment>
<evidence type="ECO:0000250" key="1">
    <source>
        <dbReference type="UniProtKB" id="P25526"/>
    </source>
</evidence>
<evidence type="ECO:0000269" key="2">
    <source>
    </source>
</evidence>
<evidence type="ECO:0000303" key="3">
    <source>
    </source>
</evidence>
<evidence type="ECO:0000305" key="4"/>
<evidence type="ECO:0000305" key="5">
    <source>
    </source>
</evidence>
<evidence type="ECO:0000312" key="6">
    <source>
        <dbReference type="EMBL" id="CAB61810.1"/>
    </source>
</evidence>
<keyword id="KW-0119">Carbohydrate metabolism</keyword>
<keyword id="KW-0521">NADP</keyword>
<keyword id="KW-0560">Oxidoreductase</keyword>
<keyword id="KW-1185">Reference proteome</keyword>
<sequence length="492" mass="52173">MTHELFDSKGLLGSAPAAFVAGEYELDSSHGTLPVINPANGQLVAEVPSSSSSTVDRAVTAAVAAQREWGRRSHVARAAVLEAVRDAIAVHADELARIVSVEQGKPLSDARGETEGACAFFDFAISQKYRAVGSMMASEPGRSLGVREEPIGVVAAILPWNFPVAIFARKVAPALMAGNAVVLKPSELTPLSALALARLCRLAGVPDGLLSVVCGEGKDTGRALVTHPGVGMVTMTGSTRGGREILAQVADQIIPVSLELGGKAPFIVFEDADLDAAVEAAADARLWNTGQVCTCNEVTYVHADLHDEFVRRVVDRFASVTPLDPFAAGSRLGPLVAERERTRVQGMVDAAVAAGARVRTGGGRPDGEQYQSGAWFAPTVLTNVRPEMDIARREVFGPVLPIIPFDAEAEVVSAANSTAYGLTAYVYTRDLSRAMRMIDALEFGEVYVNQAGPEQVQGFHTGWKSSGLGGDDGPHGYEKYLRRKTVYVRHAV</sequence>
<proteinExistence type="evidence at protein level"/>
<gene>
    <name evidence="6" type="ordered locus">SCO3486</name>
    <name evidence="6" type="ORF">SCE65.22</name>
</gene>
<protein>
    <recommendedName>
        <fullName evidence="4">3,6-anhydro-alpha-L-galactose dehydrogenase</fullName>
        <shortName evidence="3">AHG dehydrogenase</shortName>
        <ecNumber evidence="2">1.2.1.92</ecNumber>
    </recommendedName>
</protein>
<feature type="chain" id="PRO_0000458059" description="3,6-anhydro-alpha-L-galactose dehydrogenase">
    <location>
        <begin position="1"/>
        <end position="492"/>
    </location>
</feature>
<feature type="active site" description="Proton acceptor" evidence="1">
    <location>
        <position position="259"/>
    </location>
</feature>
<feature type="active site" description="Nucleophile" evidence="1">
    <location>
        <position position="293"/>
    </location>
</feature>
<feature type="binding site" evidence="1">
    <location>
        <begin position="160"/>
        <end position="161"/>
    </location>
    <ligand>
        <name>NADP(+)</name>
        <dbReference type="ChEBI" id="CHEBI:58349"/>
    </ligand>
</feature>
<feature type="binding site" evidence="1">
    <location>
        <begin position="184"/>
        <end position="187"/>
    </location>
    <ligand>
        <name>NADP(+)</name>
        <dbReference type="ChEBI" id="CHEBI:58349"/>
    </ligand>
</feature>
<feature type="binding site" evidence="1">
    <location>
        <begin position="237"/>
        <end position="238"/>
    </location>
    <ligand>
        <name>NADP(+)</name>
        <dbReference type="ChEBI" id="CHEBI:58349"/>
    </ligand>
</feature>
<feature type="binding site" evidence="1">
    <location>
        <position position="260"/>
    </location>
    <ligand>
        <name>NADP(+)</name>
        <dbReference type="ChEBI" id="CHEBI:58349"/>
    </ligand>
</feature>
<feature type="binding site" evidence="1">
    <location>
        <position position="394"/>
    </location>
    <ligand>
        <name>NADP(+)</name>
        <dbReference type="ChEBI" id="CHEBI:58349"/>
    </ligand>
</feature>